<accession>A8AZL1</accession>
<keyword id="KW-1185">Reference proteome</keyword>
<keyword id="KW-0687">Ribonucleoprotein</keyword>
<keyword id="KW-0689">Ribosomal protein</keyword>
<keyword id="KW-0694">RNA-binding</keyword>
<keyword id="KW-0699">rRNA-binding</keyword>
<name>RS8_STRGC</name>
<protein>
    <recommendedName>
        <fullName evidence="1">Small ribosomal subunit protein uS8</fullName>
    </recommendedName>
    <alternativeName>
        <fullName evidence="2">30S ribosomal protein S8</fullName>
    </alternativeName>
</protein>
<comment type="function">
    <text evidence="1">One of the primary rRNA binding proteins, it binds directly to 16S rRNA central domain where it helps coordinate assembly of the platform of the 30S subunit.</text>
</comment>
<comment type="subunit">
    <text evidence="1">Part of the 30S ribosomal subunit. Contacts proteins S5 and S12.</text>
</comment>
<comment type="similarity">
    <text evidence="1">Belongs to the universal ribosomal protein uS8 family.</text>
</comment>
<evidence type="ECO:0000255" key="1">
    <source>
        <dbReference type="HAMAP-Rule" id="MF_01302"/>
    </source>
</evidence>
<evidence type="ECO:0000305" key="2"/>
<dbReference type="EMBL" id="CP000725">
    <property type="protein sequence ID" value="ABV10895.1"/>
    <property type="molecule type" value="Genomic_DNA"/>
</dbReference>
<dbReference type="RefSeq" id="WP_008809901.1">
    <property type="nucleotide sequence ID" value="NC_009785.1"/>
</dbReference>
<dbReference type="SMR" id="A8AZL1"/>
<dbReference type="STRING" id="467705.SGO_1971"/>
<dbReference type="GeneID" id="93786856"/>
<dbReference type="KEGG" id="sgo:SGO_1971"/>
<dbReference type="eggNOG" id="COG0096">
    <property type="taxonomic scope" value="Bacteria"/>
</dbReference>
<dbReference type="HOGENOM" id="CLU_098428_0_2_9"/>
<dbReference type="Proteomes" id="UP000001131">
    <property type="component" value="Chromosome"/>
</dbReference>
<dbReference type="GO" id="GO:1990904">
    <property type="term" value="C:ribonucleoprotein complex"/>
    <property type="evidence" value="ECO:0007669"/>
    <property type="project" value="UniProtKB-KW"/>
</dbReference>
<dbReference type="GO" id="GO:0005840">
    <property type="term" value="C:ribosome"/>
    <property type="evidence" value="ECO:0007669"/>
    <property type="project" value="UniProtKB-KW"/>
</dbReference>
<dbReference type="GO" id="GO:0019843">
    <property type="term" value="F:rRNA binding"/>
    <property type="evidence" value="ECO:0007669"/>
    <property type="project" value="UniProtKB-UniRule"/>
</dbReference>
<dbReference type="GO" id="GO:0003735">
    <property type="term" value="F:structural constituent of ribosome"/>
    <property type="evidence" value="ECO:0007669"/>
    <property type="project" value="InterPro"/>
</dbReference>
<dbReference type="GO" id="GO:0006412">
    <property type="term" value="P:translation"/>
    <property type="evidence" value="ECO:0007669"/>
    <property type="project" value="UniProtKB-UniRule"/>
</dbReference>
<dbReference type="FunFam" id="3.30.1370.30:FF:000002">
    <property type="entry name" value="30S ribosomal protein S8"/>
    <property type="match status" value="1"/>
</dbReference>
<dbReference type="FunFam" id="3.30.1490.10:FF:000001">
    <property type="entry name" value="30S ribosomal protein S8"/>
    <property type="match status" value="1"/>
</dbReference>
<dbReference type="Gene3D" id="3.30.1370.30">
    <property type="match status" value="1"/>
</dbReference>
<dbReference type="Gene3D" id="3.30.1490.10">
    <property type="match status" value="1"/>
</dbReference>
<dbReference type="HAMAP" id="MF_01302_B">
    <property type="entry name" value="Ribosomal_uS8_B"/>
    <property type="match status" value="1"/>
</dbReference>
<dbReference type="InterPro" id="IPR000630">
    <property type="entry name" value="Ribosomal_uS8"/>
</dbReference>
<dbReference type="InterPro" id="IPR047863">
    <property type="entry name" value="Ribosomal_uS8_CS"/>
</dbReference>
<dbReference type="InterPro" id="IPR035987">
    <property type="entry name" value="Ribosomal_uS8_sf"/>
</dbReference>
<dbReference type="NCBIfam" id="NF001109">
    <property type="entry name" value="PRK00136.1"/>
    <property type="match status" value="1"/>
</dbReference>
<dbReference type="PANTHER" id="PTHR11758">
    <property type="entry name" value="40S RIBOSOMAL PROTEIN S15A"/>
    <property type="match status" value="1"/>
</dbReference>
<dbReference type="Pfam" id="PF00410">
    <property type="entry name" value="Ribosomal_S8"/>
    <property type="match status" value="1"/>
</dbReference>
<dbReference type="SUPFAM" id="SSF56047">
    <property type="entry name" value="Ribosomal protein S8"/>
    <property type="match status" value="1"/>
</dbReference>
<dbReference type="PROSITE" id="PS00053">
    <property type="entry name" value="RIBOSOMAL_S8"/>
    <property type="match status" value="1"/>
</dbReference>
<proteinExistence type="inferred from homology"/>
<gene>
    <name evidence="1" type="primary">rpsH</name>
    <name type="ordered locus">SGO_1971</name>
</gene>
<reference key="1">
    <citation type="journal article" date="2007" name="J. Bacteriol.">
        <title>Genome-wide transcriptional changes in Streptococcus gordonii in response to competence signaling peptide.</title>
        <authorList>
            <person name="Vickerman M.M."/>
            <person name="Iobst S."/>
            <person name="Jesionowski A.M."/>
            <person name="Gill S.R."/>
        </authorList>
    </citation>
    <scope>NUCLEOTIDE SEQUENCE [LARGE SCALE GENOMIC DNA]</scope>
    <source>
        <strain>Challis / ATCC 35105 / BCRC 15272 / CH1 / DL1 / V288</strain>
    </source>
</reference>
<sequence>MVMTDPIADFLTRIRNANQANHEVLEVPASNIKKGIAEILKREGFVKNVEFIEDDKQGIIRVFLKYGQNGEKVITGLKRVSKPGLRVYKKREDLPKVLNGLGIAILSTSEGLLTDKEARQKNVGGEVIAYVW</sequence>
<organism>
    <name type="scientific">Streptococcus gordonii (strain Challis / ATCC 35105 / BCRC 15272 / CH1 / DL1 / V288)</name>
    <dbReference type="NCBI Taxonomy" id="467705"/>
    <lineage>
        <taxon>Bacteria</taxon>
        <taxon>Bacillati</taxon>
        <taxon>Bacillota</taxon>
        <taxon>Bacilli</taxon>
        <taxon>Lactobacillales</taxon>
        <taxon>Streptococcaceae</taxon>
        <taxon>Streptococcus</taxon>
    </lineage>
</organism>
<feature type="chain" id="PRO_0000322023" description="Small ribosomal subunit protein uS8">
    <location>
        <begin position="1"/>
        <end position="132"/>
    </location>
</feature>